<protein>
    <recommendedName>
        <fullName evidence="1">tRNA uridine 5-carboxymethylaminomethyl modification enzyme MnmG</fullName>
    </recommendedName>
    <alternativeName>
        <fullName evidence="1">Glucose-inhibited division protein A</fullName>
    </alternativeName>
</protein>
<proteinExistence type="inferred from homology"/>
<accession>Q39PR0</accession>
<keyword id="KW-0963">Cytoplasm</keyword>
<keyword id="KW-0274">FAD</keyword>
<keyword id="KW-0285">Flavoprotein</keyword>
<keyword id="KW-0520">NAD</keyword>
<keyword id="KW-1185">Reference proteome</keyword>
<keyword id="KW-0819">tRNA processing</keyword>
<gene>
    <name evidence="1" type="primary">mnmG</name>
    <name evidence="1" type="synonym">gidA</name>
    <name type="ordered locus">Gmet_3559</name>
</gene>
<reference key="1">
    <citation type="journal article" date="2009" name="BMC Microbiol.">
        <title>The genome sequence of Geobacter metallireducens: features of metabolism, physiology and regulation common and dissimilar to Geobacter sulfurreducens.</title>
        <authorList>
            <person name="Aklujkar M."/>
            <person name="Krushkal J."/>
            <person name="DiBartolo G."/>
            <person name="Lapidus A."/>
            <person name="Land M.L."/>
            <person name="Lovley D.R."/>
        </authorList>
    </citation>
    <scope>NUCLEOTIDE SEQUENCE [LARGE SCALE GENOMIC DNA]</scope>
    <source>
        <strain>ATCC 53774 / DSM 7210 / GS-15</strain>
    </source>
</reference>
<organism>
    <name type="scientific">Geobacter metallireducens (strain ATCC 53774 / DSM 7210 / GS-15)</name>
    <dbReference type="NCBI Taxonomy" id="269799"/>
    <lineage>
        <taxon>Bacteria</taxon>
        <taxon>Pseudomonadati</taxon>
        <taxon>Thermodesulfobacteriota</taxon>
        <taxon>Desulfuromonadia</taxon>
        <taxon>Geobacterales</taxon>
        <taxon>Geobacteraceae</taxon>
        <taxon>Geobacter</taxon>
    </lineage>
</organism>
<dbReference type="EMBL" id="CP000148">
    <property type="protein sequence ID" value="ABB33764.1"/>
    <property type="molecule type" value="Genomic_DNA"/>
</dbReference>
<dbReference type="RefSeq" id="WP_004513715.1">
    <property type="nucleotide sequence ID" value="NC_007517.1"/>
</dbReference>
<dbReference type="SMR" id="Q39PR0"/>
<dbReference type="STRING" id="269799.Gmet_3559"/>
<dbReference type="KEGG" id="gme:Gmet_3559"/>
<dbReference type="eggNOG" id="COG0445">
    <property type="taxonomic scope" value="Bacteria"/>
</dbReference>
<dbReference type="HOGENOM" id="CLU_007831_2_2_7"/>
<dbReference type="Proteomes" id="UP000007073">
    <property type="component" value="Chromosome"/>
</dbReference>
<dbReference type="GO" id="GO:0005829">
    <property type="term" value="C:cytosol"/>
    <property type="evidence" value="ECO:0007669"/>
    <property type="project" value="TreeGrafter"/>
</dbReference>
<dbReference type="GO" id="GO:0050660">
    <property type="term" value="F:flavin adenine dinucleotide binding"/>
    <property type="evidence" value="ECO:0007669"/>
    <property type="project" value="UniProtKB-UniRule"/>
</dbReference>
<dbReference type="GO" id="GO:0030488">
    <property type="term" value="P:tRNA methylation"/>
    <property type="evidence" value="ECO:0007669"/>
    <property type="project" value="TreeGrafter"/>
</dbReference>
<dbReference type="GO" id="GO:0002098">
    <property type="term" value="P:tRNA wobble uridine modification"/>
    <property type="evidence" value="ECO:0007669"/>
    <property type="project" value="InterPro"/>
</dbReference>
<dbReference type="FunFam" id="1.10.10.1800:FF:000001">
    <property type="entry name" value="tRNA uridine 5-carboxymethylaminomethyl modification enzyme MnmG"/>
    <property type="match status" value="1"/>
</dbReference>
<dbReference type="FunFam" id="1.10.150.570:FF:000001">
    <property type="entry name" value="tRNA uridine 5-carboxymethylaminomethyl modification enzyme MnmG"/>
    <property type="match status" value="1"/>
</dbReference>
<dbReference type="FunFam" id="3.50.50.60:FF:000002">
    <property type="entry name" value="tRNA uridine 5-carboxymethylaminomethyl modification enzyme MnmG"/>
    <property type="match status" value="1"/>
</dbReference>
<dbReference type="FunFam" id="3.50.50.60:FF:000063">
    <property type="entry name" value="tRNA uridine 5-carboxymethylaminomethyl modification enzyme MnmG"/>
    <property type="match status" value="1"/>
</dbReference>
<dbReference type="Gene3D" id="3.50.50.60">
    <property type="entry name" value="FAD/NAD(P)-binding domain"/>
    <property type="match status" value="2"/>
</dbReference>
<dbReference type="Gene3D" id="1.10.150.570">
    <property type="entry name" value="GidA associated domain, C-terminal subdomain"/>
    <property type="match status" value="1"/>
</dbReference>
<dbReference type="Gene3D" id="1.10.10.1800">
    <property type="entry name" value="tRNA uridine 5-carboxymethylaminomethyl modification enzyme MnmG/GidA"/>
    <property type="match status" value="1"/>
</dbReference>
<dbReference type="HAMAP" id="MF_00129">
    <property type="entry name" value="MnmG_GidA"/>
    <property type="match status" value="1"/>
</dbReference>
<dbReference type="InterPro" id="IPR036188">
    <property type="entry name" value="FAD/NAD-bd_sf"/>
</dbReference>
<dbReference type="InterPro" id="IPR049312">
    <property type="entry name" value="GIDA_C_N"/>
</dbReference>
<dbReference type="InterPro" id="IPR004416">
    <property type="entry name" value="MnmG"/>
</dbReference>
<dbReference type="InterPro" id="IPR002218">
    <property type="entry name" value="MnmG-rel"/>
</dbReference>
<dbReference type="InterPro" id="IPR020595">
    <property type="entry name" value="MnmG-rel_CS"/>
</dbReference>
<dbReference type="InterPro" id="IPR026904">
    <property type="entry name" value="MnmG_C"/>
</dbReference>
<dbReference type="InterPro" id="IPR047001">
    <property type="entry name" value="MnmG_C_subdom"/>
</dbReference>
<dbReference type="InterPro" id="IPR044920">
    <property type="entry name" value="MnmG_C_subdom_sf"/>
</dbReference>
<dbReference type="InterPro" id="IPR040131">
    <property type="entry name" value="MnmG_N"/>
</dbReference>
<dbReference type="NCBIfam" id="TIGR00136">
    <property type="entry name" value="mnmG_gidA"/>
    <property type="match status" value="1"/>
</dbReference>
<dbReference type="PANTHER" id="PTHR11806">
    <property type="entry name" value="GLUCOSE INHIBITED DIVISION PROTEIN A"/>
    <property type="match status" value="1"/>
</dbReference>
<dbReference type="PANTHER" id="PTHR11806:SF0">
    <property type="entry name" value="PROTEIN MTO1 HOMOLOG, MITOCHONDRIAL"/>
    <property type="match status" value="1"/>
</dbReference>
<dbReference type="Pfam" id="PF01134">
    <property type="entry name" value="GIDA"/>
    <property type="match status" value="1"/>
</dbReference>
<dbReference type="Pfam" id="PF21680">
    <property type="entry name" value="GIDA_C_1st"/>
    <property type="match status" value="1"/>
</dbReference>
<dbReference type="Pfam" id="PF13932">
    <property type="entry name" value="SAM_GIDA_C"/>
    <property type="match status" value="1"/>
</dbReference>
<dbReference type="PRINTS" id="PR00411">
    <property type="entry name" value="PNDRDTASEI"/>
</dbReference>
<dbReference type="SMART" id="SM01228">
    <property type="entry name" value="GIDA_assoc_3"/>
    <property type="match status" value="1"/>
</dbReference>
<dbReference type="SUPFAM" id="SSF51905">
    <property type="entry name" value="FAD/NAD(P)-binding domain"/>
    <property type="match status" value="1"/>
</dbReference>
<dbReference type="PROSITE" id="PS01280">
    <property type="entry name" value="GIDA_1"/>
    <property type="match status" value="1"/>
</dbReference>
<dbReference type="PROSITE" id="PS01281">
    <property type="entry name" value="GIDA_2"/>
    <property type="match status" value="1"/>
</dbReference>
<sequence length="624" mass="69062">MEFIDYDKQYDVIVVGAGHAGCEAALAAARMGCETLLLTINLDAIALMSCNPAIGGSAKGHLVKEIDALGGEMGKNIDATGIQFRILNTRKGPAVRASRAQADKQLYRLRMKHVMEQQERLSLKQAEVTGIVVEDGEVRGVDTKVGVRYLGATVILTTGTFMRGLIHVGLTNYPGGRAGDLPSVGLSDQLRELGFAVGRLKTGTPARLDGRTIDFTRLEPQHGDDPPVPFSFSTERIDQPQVPCYIAYTNPRSHEIIRSGLDRSPLYAGVIEGIGPRYCPSIEDKVVRFPEKDRHQTFLEPEGRDTVEYYPSGLSTSLPIDIQWAFYRSIEGLERVEIMRPAYAIEYDYVDPIQLHASLETKLVRNLYHAGQINGTSGYEEAAGQGLMAGINAALRVRDKEPLILGRSEAYIGVMIDDLVTLGTREPYRMFTSRAEYRLLLREDNADLRLRERGHAVGLVPEGAYQRFLEKRERIGAELARLKGTKLLPSEADPDFLAAFSLTALQNALTYEQLLRRPDITYEELCRIDPRAAEVPPVVREQVEIQIKYQGYIERQLDQVERARKLEGTRVPAGFDYGALPGLSAEVREKLAKFRPDTLGQASRIQGVTPAAVGILSLALKARG</sequence>
<name>MNMG_GEOMG</name>
<evidence type="ECO:0000255" key="1">
    <source>
        <dbReference type="HAMAP-Rule" id="MF_00129"/>
    </source>
</evidence>
<comment type="function">
    <text evidence="1">NAD-binding protein involved in the addition of a carboxymethylaminomethyl (cmnm) group at the wobble position (U34) of certain tRNAs, forming tRNA-cmnm(5)s(2)U34.</text>
</comment>
<comment type="cofactor">
    <cofactor evidence="1">
        <name>FAD</name>
        <dbReference type="ChEBI" id="CHEBI:57692"/>
    </cofactor>
</comment>
<comment type="subunit">
    <text evidence="1">Homodimer. Heterotetramer of two MnmE and two MnmG subunits.</text>
</comment>
<comment type="subcellular location">
    <subcellularLocation>
        <location evidence="1">Cytoplasm</location>
    </subcellularLocation>
</comment>
<comment type="similarity">
    <text evidence="1">Belongs to the MnmG family.</text>
</comment>
<feature type="chain" id="PRO_1000016603" description="tRNA uridine 5-carboxymethylaminomethyl modification enzyme MnmG">
    <location>
        <begin position="1"/>
        <end position="624"/>
    </location>
</feature>
<feature type="binding site" evidence="1">
    <location>
        <begin position="16"/>
        <end position="21"/>
    </location>
    <ligand>
        <name>FAD</name>
        <dbReference type="ChEBI" id="CHEBI:57692"/>
    </ligand>
</feature>
<feature type="binding site" evidence="1">
    <location>
        <position position="128"/>
    </location>
    <ligand>
        <name>FAD</name>
        <dbReference type="ChEBI" id="CHEBI:57692"/>
    </ligand>
</feature>
<feature type="binding site" evidence="1">
    <location>
        <position position="183"/>
    </location>
    <ligand>
        <name>FAD</name>
        <dbReference type="ChEBI" id="CHEBI:57692"/>
    </ligand>
</feature>
<feature type="binding site" evidence="1">
    <location>
        <begin position="275"/>
        <end position="289"/>
    </location>
    <ligand>
        <name>NAD(+)</name>
        <dbReference type="ChEBI" id="CHEBI:57540"/>
    </ligand>
</feature>
<feature type="binding site" evidence="1">
    <location>
        <position position="372"/>
    </location>
    <ligand>
        <name>FAD</name>
        <dbReference type="ChEBI" id="CHEBI:57692"/>
    </ligand>
</feature>